<reference key="1">
    <citation type="journal article" date="1998" name="J. Neurochem.">
        <title>Molecular characterization and expression of cloned human galanin receptors GALR2 and GALR3.</title>
        <authorList>
            <person name="Kolakowski L.F. Jr."/>
            <person name="O'Neill G.P."/>
            <person name="Howard A.D."/>
            <person name="Broussard S.R."/>
            <person name="Sullivan K.A."/>
            <person name="Feighner S.D."/>
            <person name="Sawzdargo M."/>
            <person name="Nguyen T."/>
            <person name="Kargman S."/>
            <person name="Shiao L.-L."/>
            <person name="Hreniuk D.L."/>
            <person name="Tan C.P."/>
            <person name="Evans J."/>
            <person name="Abramovitz M."/>
            <person name="Chateauneuf A."/>
            <person name="Coulombe N."/>
            <person name="Ng G."/>
            <person name="Johnson M.P."/>
            <person name="Tharian A."/>
            <person name="Khoshbouei H."/>
            <person name="George S.R."/>
            <person name="Smith R.G."/>
            <person name="O'Dowd B.F."/>
        </authorList>
    </citation>
    <scope>NUCLEOTIDE SEQUENCE</scope>
    <source>
        <strain>129/Sv</strain>
    </source>
</reference>
<reference key="2">
    <citation type="journal article" date="1998" name="J. Neurochem.">
        <title>The mouse GalR2 galanin receptor: genomic organization, cDNA cloning, and functional characterization.</title>
        <authorList>
            <person name="Pang L."/>
            <person name="Hashemi T."/>
            <person name="Lee H.J."/>
            <person name="Maguire M."/>
            <person name="Graziano M.P."/>
            <person name="Bayne M."/>
            <person name="Hawes B."/>
            <person name="Wong G."/>
            <person name="Wang S."/>
        </authorList>
    </citation>
    <scope>NUCLEOTIDE SEQUENCE [MRNA]</scope>
    <scope>FUNCTION</scope>
    <source>
        <strain>129/Sv</strain>
    </source>
</reference>
<reference key="3">
    <citation type="journal article" date="2009" name="PLoS Biol.">
        <title>Lineage-specific biology revealed by a finished genome assembly of the mouse.</title>
        <authorList>
            <person name="Church D.M."/>
            <person name="Goodstadt L."/>
            <person name="Hillier L.W."/>
            <person name="Zody M.C."/>
            <person name="Goldstein S."/>
            <person name="She X."/>
            <person name="Bult C.J."/>
            <person name="Agarwala R."/>
            <person name="Cherry J.L."/>
            <person name="DiCuccio M."/>
            <person name="Hlavina W."/>
            <person name="Kapustin Y."/>
            <person name="Meric P."/>
            <person name="Maglott D."/>
            <person name="Birtle Z."/>
            <person name="Marques A.C."/>
            <person name="Graves T."/>
            <person name="Zhou S."/>
            <person name="Teague B."/>
            <person name="Potamousis K."/>
            <person name="Churas C."/>
            <person name="Place M."/>
            <person name="Herschleb J."/>
            <person name="Runnheim R."/>
            <person name="Forrest D."/>
            <person name="Amos-Landgraf J."/>
            <person name="Schwartz D.C."/>
            <person name="Cheng Z."/>
            <person name="Lindblad-Toh K."/>
            <person name="Eichler E.E."/>
            <person name="Ponting C.P."/>
        </authorList>
    </citation>
    <scope>NUCLEOTIDE SEQUENCE [LARGE SCALE GENOMIC DNA]</scope>
    <source>
        <strain>C57BL/6J</strain>
    </source>
</reference>
<reference key="4">
    <citation type="submission" date="2005-07" db="EMBL/GenBank/DDBJ databases">
        <authorList>
            <person name="Mural R.J."/>
            <person name="Adams M.D."/>
            <person name="Myers E.W."/>
            <person name="Smith H.O."/>
            <person name="Venter J.C."/>
        </authorList>
    </citation>
    <scope>NUCLEOTIDE SEQUENCE [LARGE SCALE GENOMIC DNA]</scope>
</reference>
<reference key="5">
    <citation type="journal article" date="2004" name="Genome Res.">
        <title>The status, quality, and expansion of the NIH full-length cDNA project: the Mammalian Gene Collection (MGC).</title>
        <authorList>
            <consortium name="The MGC Project Team"/>
        </authorList>
    </citation>
    <scope>NUCLEOTIDE SEQUENCE [LARGE SCALE MRNA]</scope>
    <source>
        <tissue>Brain</tissue>
    </source>
</reference>
<protein>
    <recommendedName>
        <fullName>Galanin receptor type 2</fullName>
        <shortName>GAL2-R</shortName>
        <shortName>GALR-2</shortName>
    </recommendedName>
</protein>
<name>GALR2_MOUSE</name>
<proteinExistence type="evidence at transcript level"/>
<sequence>MNGSDSQGAEDSSQEGGGGWQPEAVLVPLFFALIFLVGAVGNALVLAVLLRGGQAVSTTNLFILNLGVADLCFILCCVPFQATIYTLDDWVFGSLLCKAVHFLIFLTMHASSFTLAAVSLDRYLAIRYPLHSRELRTPRNALAAIGLIWGLALLFSGPYLSYYSQSQLANLTVCHPAWSAPRRRAMDLCTFVFSYLLPVLVLSLTYARTLHYLWRTVDPVAAGSGSQRAKRKVTRMIVIVAVLFCLCWMPHHALILCVWFGRFPLTRATYALRILSHLVSYANSCVNPIVYALVSKHFRKGFRKICAGLLRRAPRRASGRVCILAPGNHSGGMLEPESTDLTQVSEAAGPLVPAPALPNCTTLSRTLDPAC</sequence>
<evidence type="ECO:0000250" key="1">
    <source>
        <dbReference type="UniProtKB" id="O43603"/>
    </source>
</evidence>
<evidence type="ECO:0000255" key="2"/>
<evidence type="ECO:0000255" key="3">
    <source>
        <dbReference type="PROSITE-ProRule" id="PRU00521"/>
    </source>
</evidence>
<evidence type="ECO:0000269" key="4">
    <source>
    </source>
</evidence>
<evidence type="ECO:0000305" key="5"/>
<keyword id="KW-1003">Cell membrane</keyword>
<keyword id="KW-1015">Disulfide bond</keyword>
<keyword id="KW-0297">G-protein coupled receptor</keyword>
<keyword id="KW-0325">Glycoprotein</keyword>
<keyword id="KW-0472">Membrane</keyword>
<keyword id="KW-0675">Receptor</keyword>
<keyword id="KW-1185">Reference proteome</keyword>
<keyword id="KW-0807">Transducer</keyword>
<keyword id="KW-0812">Transmembrane</keyword>
<keyword id="KW-1133">Transmembrane helix</keyword>
<accession>O88854</accession>
<accession>Q14A53</accession>
<accession>Q9Z2B0</accession>
<comment type="function">
    <text evidence="1 4">Receptor for the hormone galanin, GALP and spexin-1. The activity of this receptor is mediated by G proteins that activate the phospholipase C/protein kinase C pathway (via G(q)) and that inhibit adenylyl cyclase (via G(i)).</text>
</comment>
<comment type="subcellular location">
    <subcellularLocation>
        <location>Cell membrane</location>
        <topology>Multi-pass membrane protein</topology>
    </subcellularLocation>
</comment>
<comment type="similarity">
    <text evidence="3">Belongs to the G-protein coupled receptor 1 family.</text>
</comment>
<dbReference type="EMBL" id="AF042784">
    <property type="protein sequence ID" value="AAC36589.1"/>
    <property type="molecule type" value="Genomic_DNA"/>
</dbReference>
<dbReference type="EMBL" id="AF077375">
    <property type="protein sequence ID" value="AAC95468.1"/>
    <property type="molecule type" value="mRNA"/>
</dbReference>
<dbReference type="EMBL" id="AL645861">
    <property type="status" value="NOT_ANNOTATED_CDS"/>
    <property type="molecule type" value="Genomic_DNA"/>
</dbReference>
<dbReference type="EMBL" id="CH466558">
    <property type="protein sequence ID" value="EDL34569.1"/>
    <property type="molecule type" value="Genomic_DNA"/>
</dbReference>
<dbReference type="EMBL" id="BC116980">
    <property type="protein sequence ID" value="AAI16981.1"/>
    <property type="molecule type" value="mRNA"/>
</dbReference>
<dbReference type="EMBL" id="BC116982">
    <property type="protein sequence ID" value="AAI16983.1"/>
    <property type="molecule type" value="mRNA"/>
</dbReference>
<dbReference type="CCDS" id="CCDS25663.1"/>
<dbReference type="RefSeq" id="NP_034384.3">
    <property type="nucleotide sequence ID" value="NM_010254.4"/>
</dbReference>
<dbReference type="SMR" id="O88854"/>
<dbReference type="FunCoup" id="O88854">
    <property type="interactions" value="646"/>
</dbReference>
<dbReference type="STRING" id="10090.ENSMUSP00000054062"/>
<dbReference type="GuidetoPHARMACOLOGY" id="244"/>
<dbReference type="GlyCosmos" id="O88854">
    <property type="glycosylation" value="1 site, No reported glycans"/>
</dbReference>
<dbReference type="GlyGen" id="O88854">
    <property type="glycosylation" value="1 site"/>
</dbReference>
<dbReference type="PhosphoSitePlus" id="O88854"/>
<dbReference type="PaxDb" id="10090-ENSMUSP00000054062"/>
<dbReference type="Antibodypedia" id="19663">
    <property type="antibodies" value="298 antibodies from 36 providers"/>
</dbReference>
<dbReference type="DNASU" id="14428"/>
<dbReference type="Ensembl" id="ENSMUST00000055872.3">
    <property type="protein sequence ID" value="ENSMUSP00000054062.3"/>
    <property type="gene ID" value="ENSMUSG00000020793.6"/>
</dbReference>
<dbReference type="GeneID" id="14428"/>
<dbReference type="KEGG" id="mmu:14428"/>
<dbReference type="UCSC" id="uc007mkr.2">
    <property type="organism name" value="mouse"/>
</dbReference>
<dbReference type="AGR" id="MGI:1337018"/>
<dbReference type="CTD" id="8811"/>
<dbReference type="MGI" id="MGI:1337018">
    <property type="gene designation" value="Galr2"/>
</dbReference>
<dbReference type="VEuPathDB" id="HostDB:ENSMUSG00000020793"/>
<dbReference type="eggNOG" id="KOG3656">
    <property type="taxonomic scope" value="Eukaryota"/>
</dbReference>
<dbReference type="GeneTree" id="ENSGT01130000278323"/>
<dbReference type="HOGENOM" id="CLU_009579_6_4_1"/>
<dbReference type="InParanoid" id="O88854"/>
<dbReference type="OMA" id="LTYTRTI"/>
<dbReference type="OrthoDB" id="5964776at2759"/>
<dbReference type="PhylomeDB" id="O88854"/>
<dbReference type="TreeFam" id="TF315737"/>
<dbReference type="Reactome" id="R-MMU-375276">
    <property type="pathway name" value="Peptide ligand-binding receptors"/>
</dbReference>
<dbReference type="Reactome" id="R-MMU-418594">
    <property type="pathway name" value="G alpha (i) signalling events"/>
</dbReference>
<dbReference type="BioGRID-ORCS" id="14428">
    <property type="hits" value="6 hits in 80 CRISPR screens"/>
</dbReference>
<dbReference type="PRO" id="PR:O88854"/>
<dbReference type="Proteomes" id="UP000000589">
    <property type="component" value="Chromosome 11"/>
</dbReference>
<dbReference type="RNAct" id="O88854">
    <property type="molecule type" value="protein"/>
</dbReference>
<dbReference type="Bgee" id="ENSMUSG00000020793">
    <property type="expression patterns" value="Expressed in epiblast cell in embryo and 45 other cell types or tissues"/>
</dbReference>
<dbReference type="GO" id="GO:0005929">
    <property type="term" value="C:cilium"/>
    <property type="evidence" value="ECO:0000266"/>
    <property type="project" value="MGI"/>
</dbReference>
<dbReference type="GO" id="GO:0005886">
    <property type="term" value="C:plasma membrane"/>
    <property type="evidence" value="ECO:0007669"/>
    <property type="project" value="UniProtKB-SubCell"/>
</dbReference>
<dbReference type="GO" id="GO:0004966">
    <property type="term" value="F:galanin receptor activity"/>
    <property type="evidence" value="ECO:0000250"/>
    <property type="project" value="UniProtKB"/>
</dbReference>
<dbReference type="GO" id="GO:0042923">
    <property type="term" value="F:neuropeptide binding"/>
    <property type="evidence" value="ECO:0007669"/>
    <property type="project" value="Ensembl"/>
</dbReference>
<dbReference type="GO" id="GO:0017046">
    <property type="term" value="F:peptide hormone binding"/>
    <property type="evidence" value="ECO:0000250"/>
    <property type="project" value="UniProtKB"/>
</dbReference>
<dbReference type="GO" id="GO:0007189">
    <property type="term" value="P:adenylate cyclase-activating G protein-coupled receptor signaling pathway"/>
    <property type="evidence" value="ECO:0007669"/>
    <property type="project" value="Ensembl"/>
</dbReference>
<dbReference type="GO" id="GO:0090663">
    <property type="term" value="P:galanin-activated signaling pathway"/>
    <property type="evidence" value="ECO:0007669"/>
    <property type="project" value="Ensembl"/>
</dbReference>
<dbReference type="GO" id="GO:0043647">
    <property type="term" value="P:inositol phosphate metabolic process"/>
    <property type="evidence" value="ECO:0007669"/>
    <property type="project" value="Ensembl"/>
</dbReference>
<dbReference type="GO" id="GO:0031175">
    <property type="term" value="P:neuron projection development"/>
    <property type="evidence" value="ECO:0000314"/>
    <property type="project" value="MGI"/>
</dbReference>
<dbReference type="GO" id="GO:0046488">
    <property type="term" value="P:phosphatidylinositol metabolic process"/>
    <property type="evidence" value="ECO:0007669"/>
    <property type="project" value="Ensembl"/>
</dbReference>
<dbReference type="GO" id="GO:0007200">
    <property type="term" value="P:phospholipase C-activating G protein-coupled receptor signaling pathway"/>
    <property type="evidence" value="ECO:0007669"/>
    <property type="project" value="Ensembl"/>
</dbReference>
<dbReference type="GO" id="GO:0007204">
    <property type="term" value="P:positive regulation of cytosolic calcium ion concentration"/>
    <property type="evidence" value="ECO:0007669"/>
    <property type="project" value="Ensembl"/>
</dbReference>
<dbReference type="GO" id="GO:0045944">
    <property type="term" value="P:positive regulation of transcription by RNA polymerase II"/>
    <property type="evidence" value="ECO:0000250"/>
    <property type="project" value="UniProtKB"/>
</dbReference>
<dbReference type="CDD" id="cd15097">
    <property type="entry name" value="7tmA_Gal2_Gal3_R"/>
    <property type="match status" value="1"/>
</dbReference>
<dbReference type="FunFam" id="1.20.1070.10:FF:000092">
    <property type="entry name" value="Galanin receptor type 2"/>
    <property type="match status" value="1"/>
</dbReference>
<dbReference type="Gene3D" id="1.20.1070.10">
    <property type="entry name" value="Rhodopsin 7-helix transmembrane proteins"/>
    <property type="match status" value="1"/>
</dbReference>
<dbReference type="InterPro" id="IPR003907">
    <property type="entry name" value="GAL2_rcpt"/>
</dbReference>
<dbReference type="InterPro" id="IPR000405">
    <property type="entry name" value="Galanin_rcpt"/>
</dbReference>
<dbReference type="InterPro" id="IPR000276">
    <property type="entry name" value="GPCR_Rhodpsn"/>
</dbReference>
<dbReference type="InterPro" id="IPR017452">
    <property type="entry name" value="GPCR_Rhodpsn_7TM"/>
</dbReference>
<dbReference type="PANTHER" id="PTHR45695:SF35">
    <property type="entry name" value="GALANIN RECEPTOR TYPE 2-LIKE ISOFORM X2"/>
    <property type="match status" value="1"/>
</dbReference>
<dbReference type="PANTHER" id="PTHR45695">
    <property type="entry name" value="LEUCOKININ RECEPTOR-RELATED"/>
    <property type="match status" value="1"/>
</dbReference>
<dbReference type="Pfam" id="PF00001">
    <property type="entry name" value="7tm_1"/>
    <property type="match status" value="1"/>
</dbReference>
<dbReference type="PRINTS" id="PR01419">
    <property type="entry name" value="GALANIN2R"/>
</dbReference>
<dbReference type="PRINTS" id="PR00663">
    <property type="entry name" value="GALANINR"/>
</dbReference>
<dbReference type="PRINTS" id="PR00237">
    <property type="entry name" value="GPCRRHODOPSN"/>
</dbReference>
<dbReference type="SMART" id="SM01381">
    <property type="entry name" value="7TM_GPCR_Srsx"/>
    <property type="match status" value="1"/>
</dbReference>
<dbReference type="SUPFAM" id="SSF81321">
    <property type="entry name" value="Family A G protein-coupled receptor-like"/>
    <property type="match status" value="1"/>
</dbReference>
<dbReference type="PROSITE" id="PS00237">
    <property type="entry name" value="G_PROTEIN_RECEP_F1_1"/>
    <property type="match status" value="1"/>
</dbReference>
<dbReference type="PROSITE" id="PS50262">
    <property type="entry name" value="G_PROTEIN_RECEP_F1_2"/>
    <property type="match status" value="1"/>
</dbReference>
<feature type="chain" id="PRO_0000069467" description="Galanin receptor type 2">
    <location>
        <begin position="1"/>
        <end position="371"/>
    </location>
</feature>
<feature type="topological domain" description="Extracellular" evidence="2">
    <location>
        <begin position="1"/>
        <end position="27"/>
    </location>
</feature>
<feature type="transmembrane region" description="Helical; Name=1" evidence="2">
    <location>
        <begin position="28"/>
        <end position="48"/>
    </location>
</feature>
<feature type="topological domain" description="Cytoplasmic" evidence="2">
    <location>
        <begin position="49"/>
        <end position="59"/>
    </location>
</feature>
<feature type="transmembrane region" description="Helical; Name=2" evidence="2">
    <location>
        <begin position="60"/>
        <end position="80"/>
    </location>
</feature>
<feature type="topological domain" description="Extracellular" evidence="2">
    <location>
        <begin position="81"/>
        <end position="98"/>
    </location>
</feature>
<feature type="transmembrane region" description="Helical; Name=3" evidence="2">
    <location>
        <begin position="99"/>
        <end position="120"/>
    </location>
</feature>
<feature type="topological domain" description="Cytoplasmic" evidence="2">
    <location>
        <begin position="121"/>
        <end position="140"/>
    </location>
</feature>
<feature type="transmembrane region" description="Helical; Name=4" evidence="2">
    <location>
        <begin position="141"/>
        <end position="161"/>
    </location>
</feature>
<feature type="topological domain" description="Extracellular" evidence="2">
    <location>
        <begin position="162"/>
        <end position="186"/>
    </location>
</feature>
<feature type="transmembrane region" description="Helical; Name=5" evidence="2">
    <location>
        <begin position="187"/>
        <end position="207"/>
    </location>
</feature>
<feature type="topological domain" description="Cytoplasmic" evidence="2">
    <location>
        <begin position="208"/>
        <end position="236"/>
    </location>
</feature>
<feature type="transmembrane region" description="Helical; Name=6" evidence="2">
    <location>
        <begin position="237"/>
        <end position="257"/>
    </location>
</feature>
<feature type="topological domain" description="Extracellular" evidence="2">
    <location>
        <begin position="258"/>
        <end position="259"/>
    </location>
</feature>
<feature type="transmembrane region" description="Helical; Name=7" evidence="2">
    <location>
        <begin position="260"/>
        <end position="280"/>
    </location>
</feature>
<feature type="topological domain" description="Cytoplasmic" evidence="2">
    <location>
        <begin position="281"/>
        <end position="371"/>
    </location>
</feature>
<feature type="glycosylation site" description="N-linked (GlcNAc...) asparagine" evidence="2">
    <location>
        <position position="2"/>
    </location>
</feature>
<feature type="disulfide bond" evidence="3">
    <location>
        <begin position="97"/>
        <end position="174"/>
    </location>
</feature>
<feature type="sequence conflict" description="In Ref. 1; AAC36589." evidence="5" ref="1">
    <original>L</original>
    <variation>M</variation>
    <location>
        <position position="130"/>
    </location>
</feature>
<feature type="sequence conflict" description="In Ref. 2." evidence="5" ref="2">
    <original>RAMDL</original>
    <variation>PWNS</variation>
    <location>
        <begin position="184"/>
        <end position="188"/>
    </location>
</feature>
<feature type="sequence conflict" description="In Ref. 2; AAC95468." evidence="5" ref="2">
    <original>VF</original>
    <variation>CL</variation>
    <location>
        <begin position="192"/>
        <end position="193"/>
    </location>
</feature>
<feature type="sequence conflict" description="In Ref. 2; AAC95468." evidence="5" ref="2">
    <original>A</original>
    <variation>V</variation>
    <location>
        <position position="221"/>
    </location>
</feature>
<feature type="sequence conflict" description="In Ref. 2." evidence="5" ref="2">
    <original>SEAAGPLVPAPALPNC</original>
    <variation>KRGSRAPRPRTRTSQT</variation>
    <location>
        <begin position="345"/>
        <end position="360"/>
    </location>
</feature>
<organism>
    <name type="scientific">Mus musculus</name>
    <name type="common">Mouse</name>
    <dbReference type="NCBI Taxonomy" id="10090"/>
    <lineage>
        <taxon>Eukaryota</taxon>
        <taxon>Metazoa</taxon>
        <taxon>Chordata</taxon>
        <taxon>Craniata</taxon>
        <taxon>Vertebrata</taxon>
        <taxon>Euteleostomi</taxon>
        <taxon>Mammalia</taxon>
        <taxon>Eutheria</taxon>
        <taxon>Euarchontoglires</taxon>
        <taxon>Glires</taxon>
        <taxon>Rodentia</taxon>
        <taxon>Myomorpha</taxon>
        <taxon>Muroidea</taxon>
        <taxon>Muridae</taxon>
        <taxon>Murinae</taxon>
        <taxon>Mus</taxon>
        <taxon>Mus</taxon>
    </lineage>
</organism>
<gene>
    <name type="primary">Galr2</name>
    <name type="synonym">Galnr2</name>
</gene>